<gene>
    <name evidence="1" type="primary">rpmI</name>
    <name type="ordered locus">Pnuc_0831</name>
</gene>
<protein>
    <recommendedName>
        <fullName evidence="1">Large ribosomal subunit protein bL35</fullName>
    </recommendedName>
    <alternativeName>
        <fullName evidence="2">50S ribosomal protein L35</fullName>
    </alternativeName>
</protein>
<name>RL35_POLAQ</name>
<organism>
    <name type="scientific">Polynucleobacter asymbioticus (strain DSM 18221 / CIP 109841 / QLW-P1DMWA-1)</name>
    <name type="common">Polynucleobacter necessarius subsp. asymbioticus</name>
    <dbReference type="NCBI Taxonomy" id="312153"/>
    <lineage>
        <taxon>Bacteria</taxon>
        <taxon>Pseudomonadati</taxon>
        <taxon>Pseudomonadota</taxon>
        <taxon>Betaproteobacteria</taxon>
        <taxon>Burkholderiales</taxon>
        <taxon>Burkholderiaceae</taxon>
        <taxon>Polynucleobacter</taxon>
    </lineage>
</organism>
<dbReference type="EMBL" id="CP000655">
    <property type="protein sequence ID" value="ABP34049.1"/>
    <property type="molecule type" value="Genomic_DNA"/>
</dbReference>
<dbReference type="RefSeq" id="WP_011902674.1">
    <property type="nucleotide sequence ID" value="NC_009379.1"/>
</dbReference>
<dbReference type="SMR" id="A4SX35"/>
<dbReference type="GeneID" id="31481193"/>
<dbReference type="KEGG" id="pnu:Pnuc_0831"/>
<dbReference type="eggNOG" id="COG0291">
    <property type="taxonomic scope" value="Bacteria"/>
</dbReference>
<dbReference type="HOGENOM" id="CLU_169643_1_0_4"/>
<dbReference type="Proteomes" id="UP000000231">
    <property type="component" value="Chromosome"/>
</dbReference>
<dbReference type="GO" id="GO:0022625">
    <property type="term" value="C:cytosolic large ribosomal subunit"/>
    <property type="evidence" value="ECO:0007669"/>
    <property type="project" value="TreeGrafter"/>
</dbReference>
<dbReference type="GO" id="GO:0003735">
    <property type="term" value="F:structural constituent of ribosome"/>
    <property type="evidence" value="ECO:0007669"/>
    <property type="project" value="InterPro"/>
</dbReference>
<dbReference type="GO" id="GO:0006412">
    <property type="term" value="P:translation"/>
    <property type="evidence" value="ECO:0007669"/>
    <property type="project" value="UniProtKB-UniRule"/>
</dbReference>
<dbReference type="FunFam" id="4.10.410.60:FF:000001">
    <property type="entry name" value="50S ribosomal protein L35"/>
    <property type="match status" value="1"/>
</dbReference>
<dbReference type="Gene3D" id="4.10.410.60">
    <property type="match status" value="1"/>
</dbReference>
<dbReference type="HAMAP" id="MF_00514">
    <property type="entry name" value="Ribosomal_bL35"/>
    <property type="match status" value="1"/>
</dbReference>
<dbReference type="InterPro" id="IPR001706">
    <property type="entry name" value="Ribosomal_bL35"/>
</dbReference>
<dbReference type="InterPro" id="IPR021137">
    <property type="entry name" value="Ribosomal_bL35-like"/>
</dbReference>
<dbReference type="InterPro" id="IPR018265">
    <property type="entry name" value="Ribosomal_bL35_CS"/>
</dbReference>
<dbReference type="InterPro" id="IPR037229">
    <property type="entry name" value="Ribosomal_bL35_sf"/>
</dbReference>
<dbReference type="NCBIfam" id="TIGR00001">
    <property type="entry name" value="rpmI_bact"/>
    <property type="match status" value="1"/>
</dbReference>
<dbReference type="PANTHER" id="PTHR33343">
    <property type="entry name" value="54S RIBOSOMAL PROTEIN BL35M"/>
    <property type="match status" value="1"/>
</dbReference>
<dbReference type="PANTHER" id="PTHR33343:SF1">
    <property type="entry name" value="LARGE RIBOSOMAL SUBUNIT PROTEIN BL35M"/>
    <property type="match status" value="1"/>
</dbReference>
<dbReference type="Pfam" id="PF01632">
    <property type="entry name" value="Ribosomal_L35p"/>
    <property type="match status" value="1"/>
</dbReference>
<dbReference type="PRINTS" id="PR00064">
    <property type="entry name" value="RIBOSOMALL35"/>
</dbReference>
<dbReference type="SUPFAM" id="SSF143034">
    <property type="entry name" value="L35p-like"/>
    <property type="match status" value="1"/>
</dbReference>
<dbReference type="PROSITE" id="PS00936">
    <property type="entry name" value="RIBOSOMAL_L35"/>
    <property type="match status" value="1"/>
</dbReference>
<comment type="similarity">
    <text evidence="1">Belongs to the bacterial ribosomal protein bL35 family.</text>
</comment>
<evidence type="ECO:0000255" key="1">
    <source>
        <dbReference type="HAMAP-Rule" id="MF_00514"/>
    </source>
</evidence>
<evidence type="ECO:0000305" key="2"/>
<proteinExistence type="inferred from homology"/>
<feature type="chain" id="PRO_1000081618" description="Large ribosomal subunit protein bL35">
    <location>
        <begin position="1"/>
        <end position="65"/>
    </location>
</feature>
<accession>A4SX35</accession>
<sequence>MPKMKSKSSAKKRFTVRAGGTIKRGQAFKRHILTKKTTKNKRHLRGSTEVAKADVKSIRSMLPYA</sequence>
<reference key="1">
    <citation type="journal article" date="2012" name="Stand. Genomic Sci.">
        <title>Complete genome sequence of Polynucleobacter necessarius subsp. asymbioticus type strain (QLW-P1DMWA-1(T)).</title>
        <authorList>
            <person name="Meincke L."/>
            <person name="Copeland A."/>
            <person name="Lapidus A."/>
            <person name="Lucas S."/>
            <person name="Berry K.W."/>
            <person name="Del Rio T.G."/>
            <person name="Hammon N."/>
            <person name="Dalin E."/>
            <person name="Tice H."/>
            <person name="Pitluck S."/>
            <person name="Richardson P."/>
            <person name="Bruce D."/>
            <person name="Goodwin L."/>
            <person name="Han C."/>
            <person name="Tapia R."/>
            <person name="Detter J.C."/>
            <person name="Schmutz J."/>
            <person name="Brettin T."/>
            <person name="Larimer F."/>
            <person name="Land M."/>
            <person name="Hauser L."/>
            <person name="Kyrpides N.C."/>
            <person name="Ivanova N."/>
            <person name="Goker M."/>
            <person name="Woyke T."/>
            <person name="Wu Q.L."/>
            <person name="Pockl M."/>
            <person name="Hahn M.W."/>
            <person name="Klenk H.P."/>
        </authorList>
    </citation>
    <scope>NUCLEOTIDE SEQUENCE [LARGE SCALE GENOMIC DNA]</scope>
    <source>
        <strain>DSM 18221 / CIP 109841 / QLW-P1DMWA-1</strain>
    </source>
</reference>
<keyword id="KW-1185">Reference proteome</keyword>
<keyword id="KW-0687">Ribonucleoprotein</keyword>
<keyword id="KW-0689">Ribosomal protein</keyword>